<feature type="chain" id="PRO_0000119171" description="Kelch repeat protein M-T9">
    <location>
        <begin position="1"/>
        <end position="509"/>
    </location>
</feature>
<feature type="domain" description="BTB" evidence="1">
    <location>
        <begin position="15"/>
        <end position="79"/>
    </location>
</feature>
<feature type="repeat" description="Kelch 1">
    <location>
        <begin position="274"/>
        <end position="320"/>
    </location>
</feature>
<feature type="repeat" description="Kelch 2">
    <location>
        <begin position="321"/>
        <end position="368"/>
    </location>
</feature>
<feature type="repeat" description="Kelch 3">
    <location>
        <begin position="370"/>
        <end position="415"/>
    </location>
</feature>
<feature type="repeat" description="Kelch 4">
    <location>
        <begin position="416"/>
        <end position="463"/>
    </location>
</feature>
<feature type="repeat" description="Kelch 5">
    <location>
        <begin position="465"/>
        <end position="509"/>
    </location>
</feature>
<organism>
    <name type="scientific">Myxoma virus (strain Lausanne)</name>
    <name type="common">MYXV</name>
    <dbReference type="NCBI Taxonomy" id="31530"/>
    <lineage>
        <taxon>Viruses</taxon>
        <taxon>Varidnaviria</taxon>
        <taxon>Bamfordvirae</taxon>
        <taxon>Nucleocytoviricota</taxon>
        <taxon>Pokkesviricetes</taxon>
        <taxon>Chitovirales</taxon>
        <taxon>Poxviridae</taxon>
        <taxon>Chordopoxvirinae</taxon>
        <taxon>Leporipoxvirus</taxon>
        <taxon>Myxoma virus</taxon>
    </lineage>
</organism>
<keyword id="KW-0880">Kelch repeat</keyword>
<keyword id="KW-1185">Reference proteome</keyword>
<keyword id="KW-0677">Repeat</keyword>
<evidence type="ECO:0000255" key="1">
    <source>
        <dbReference type="PROSITE-ProRule" id="PRU00037"/>
    </source>
</evidence>
<evidence type="ECO:0000305" key="2"/>
<dbReference type="EMBL" id="M15806">
    <property type="protein sequence ID" value="AAA46627.1"/>
    <property type="molecule type" value="Genomic_DNA"/>
</dbReference>
<dbReference type="EMBL" id="AF170726">
    <property type="protein sequence ID" value="AAF14897.1"/>
    <property type="molecule type" value="Genomic_DNA"/>
</dbReference>
<dbReference type="PIR" id="A36418">
    <property type="entry name" value="WMVZMX"/>
</dbReference>
<dbReference type="RefSeq" id="NP_051723.1">
    <property type="nucleotide sequence ID" value="NC_001132.2"/>
</dbReference>
<dbReference type="SMR" id="P08073"/>
<dbReference type="GeneID" id="932145"/>
<dbReference type="KEGG" id="vg:932145"/>
<dbReference type="Proteomes" id="UP000000867">
    <property type="component" value="Segment"/>
</dbReference>
<dbReference type="CDD" id="cd18186">
    <property type="entry name" value="BTB_POZ_ZBTB_KLHL-like"/>
    <property type="match status" value="1"/>
</dbReference>
<dbReference type="Gene3D" id="2.120.10.80">
    <property type="entry name" value="Kelch-type beta propeller"/>
    <property type="match status" value="1"/>
</dbReference>
<dbReference type="Gene3D" id="3.30.710.10">
    <property type="entry name" value="Potassium Channel Kv1.1, Chain A"/>
    <property type="match status" value="1"/>
</dbReference>
<dbReference type="InterPro" id="IPR011705">
    <property type="entry name" value="BACK"/>
</dbReference>
<dbReference type="InterPro" id="IPR000210">
    <property type="entry name" value="BTB/POZ_dom"/>
</dbReference>
<dbReference type="InterPro" id="IPR015915">
    <property type="entry name" value="Kelch-typ_b-propeller"/>
</dbReference>
<dbReference type="InterPro" id="IPR006652">
    <property type="entry name" value="Kelch_1"/>
</dbReference>
<dbReference type="InterPro" id="IPR011333">
    <property type="entry name" value="SKP1/BTB/POZ_sf"/>
</dbReference>
<dbReference type="InterPro" id="IPR024182">
    <property type="entry name" value="Vaccinia_A55R"/>
</dbReference>
<dbReference type="PANTHER" id="PTHR24412">
    <property type="entry name" value="KELCH PROTEIN"/>
    <property type="match status" value="1"/>
</dbReference>
<dbReference type="PANTHER" id="PTHR24412:SF489">
    <property type="entry name" value="RING FINGER DOMAIN AND KELCH REPEAT-CONTAINING PROTEIN DDB_G0271372"/>
    <property type="match status" value="1"/>
</dbReference>
<dbReference type="Pfam" id="PF07707">
    <property type="entry name" value="BACK"/>
    <property type="match status" value="1"/>
</dbReference>
<dbReference type="Pfam" id="PF00651">
    <property type="entry name" value="BTB"/>
    <property type="match status" value="1"/>
</dbReference>
<dbReference type="Pfam" id="PF01344">
    <property type="entry name" value="Kelch_1"/>
    <property type="match status" value="3"/>
</dbReference>
<dbReference type="PIRSF" id="PIRSF003716">
    <property type="entry name" value="VAC_F3L"/>
    <property type="match status" value="1"/>
</dbReference>
<dbReference type="SMART" id="SM00225">
    <property type="entry name" value="BTB"/>
    <property type="match status" value="1"/>
</dbReference>
<dbReference type="SMART" id="SM00612">
    <property type="entry name" value="Kelch"/>
    <property type="match status" value="3"/>
</dbReference>
<dbReference type="SUPFAM" id="SSF117281">
    <property type="entry name" value="Kelch motif"/>
    <property type="match status" value="1"/>
</dbReference>
<dbReference type="SUPFAM" id="SSF54695">
    <property type="entry name" value="POZ domain"/>
    <property type="match status" value="1"/>
</dbReference>
<dbReference type="PROSITE" id="PS50097">
    <property type="entry name" value="BTB"/>
    <property type="match status" value="1"/>
</dbReference>
<protein>
    <recommendedName>
        <fullName>Kelch repeat protein M-T9</fullName>
    </recommendedName>
    <alternativeName>
        <fullName>M9-R polypeptide</fullName>
    </alternativeName>
</protein>
<reference key="1">
    <citation type="journal article" date="1990" name="Virology">
        <title>Myxoma virus and malignant rabbit fibroma virus encode a serpin-like protein important for virus virulence.</title>
        <authorList>
            <person name="Upton C."/>
            <person name="Macen J.L."/>
            <person name="Wishart D.S."/>
            <person name="McFadden G."/>
        </authorList>
    </citation>
    <scope>NUCLEOTIDE SEQUENCE [GENOMIC DNA]</scope>
</reference>
<reference key="2">
    <citation type="journal article" date="1999" name="Virology">
        <title>The complete DNA sequence of myxoma virus.</title>
        <authorList>
            <person name="Cameron C."/>
            <person name="Hota-Mitchell S."/>
            <person name="Chen L."/>
            <person name="Barrett J.W."/>
            <person name="Cao J.-X."/>
            <person name="Macaulay C."/>
            <person name="Willer D.O."/>
            <person name="Evans D.H."/>
            <person name="McFadden G."/>
        </authorList>
    </citation>
    <scope>NUCLEOTIDE SEQUENCE [LARGE SCALE GENOMIC DNA]</scope>
</reference>
<reference key="3">
    <citation type="journal article" date="1987" name="J. Virol.">
        <title>Mapping and sequencing of a gene from myxoma virus that is related to those encoding epidermal growth factor and transforming growth factor alpha.</title>
        <authorList>
            <person name="Upton C."/>
            <person name="Macen J.L."/>
            <person name="McFadden G."/>
        </authorList>
    </citation>
    <scope>NUCLEOTIDE SEQUENCE [GENOMIC DNA] OF 1-235</scope>
</reference>
<accession>P08073</accession>
<organismHost>
    <name type="scientific">Oryctolagus cuniculus</name>
    <name type="common">Rabbit</name>
    <dbReference type="NCBI Taxonomy" id="9986"/>
</organismHost>
<name>VMT9_MYXVL</name>
<comment type="similarity">
    <text evidence="2">Belongs to the poxviruses Kelch family.</text>
</comment>
<proteinExistence type="inferred from homology"/>
<gene>
    <name type="ordered locus">m009L</name>
</gene>
<sequence length="509" mass="57931">MSRTLLRFLEDGAMSDVTVVAGDSTFLGHKVILSLHSDYFYRLFNGDFTSPDTVTLDATDDAVRTVFTYMYAGCDGLNDRTIDDLQSIIVLADYLGITKLVDECVRRIVSKVDVLNCVGVYTFAETYHITDLQRAAKTFLTELLGSKEAFEELSQDDAVIALRETRNIVDRRSILRAILLWVRKCPDRIEQLKVLVAAVDDVDDDDNVYTIYERYAEELKDMIACPLSYNCVVVVDRDRYVRLINPDTLWSKRVTYIRKRAIGDRFTVVCMNNVLYCLGGTLDGAPTCDVLAYDLLTNEYSLMPEMGHYRRNASACIVNGYIYVVGGVDEENRLIGSVEYWQPGMEEWHDAPYLQANVETATVCYRNELWIVGGTVDLYHPTFISAVKKLTDNRWMSMEPLPEPRSGATTVVYNNRLYCIGGRIHGGAYTNHVYNYLDESRTWERVGDMANVRRNPSCCVYNKAIYVLGGNTNAVEKYNGWKWQEVGNISTYPACNNTAYPFFYTNDEI</sequence>